<feature type="chain" id="PRO_1000142383" description="Large ribosomal subunit protein uL5">
    <location>
        <begin position="1"/>
        <end position="180"/>
    </location>
</feature>
<accession>B3R7F6</accession>
<dbReference type="EMBL" id="CU633749">
    <property type="protein sequence ID" value="CAQ70856.1"/>
    <property type="molecule type" value="Genomic_DNA"/>
</dbReference>
<dbReference type="RefSeq" id="WP_010812386.1">
    <property type="nucleotide sequence ID" value="NC_010528.1"/>
</dbReference>
<dbReference type="SMR" id="B3R7F6"/>
<dbReference type="GeneID" id="34309464"/>
<dbReference type="KEGG" id="cti:RALTA_A2931"/>
<dbReference type="eggNOG" id="COG0094">
    <property type="taxonomic scope" value="Bacteria"/>
</dbReference>
<dbReference type="HOGENOM" id="CLU_061015_2_1_4"/>
<dbReference type="BioCyc" id="CTAI977880:RALTA_RS14295-MONOMER"/>
<dbReference type="Proteomes" id="UP000001692">
    <property type="component" value="Chromosome 1"/>
</dbReference>
<dbReference type="GO" id="GO:1990904">
    <property type="term" value="C:ribonucleoprotein complex"/>
    <property type="evidence" value="ECO:0007669"/>
    <property type="project" value="UniProtKB-KW"/>
</dbReference>
<dbReference type="GO" id="GO:0005840">
    <property type="term" value="C:ribosome"/>
    <property type="evidence" value="ECO:0007669"/>
    <property type="project" value="UniProtKB-KW"/>
</dbReference>
<dbReference type="GO" id="GO:0019843">
    <property type="term" value="F:rRNA binding"/>
    <property type="evidence" value="ECO:0007669"/>
    <property type="project" value="UniProtKB-UniRule"/>
</dbReference>
<dbReference type="GO" id="GO:0003735">
    <property type="term" value="F:structural constituent of ribosome"/>
    <property type="evidence" value="ECO:0007669"/>
    <property type="project" value="InterPro"/>
</dbReference>
<dbReference type="GO" id="GO:0000049">
    <property type="term" value="F:tRNA binding"/>
    <property type="evidence" value="ECO:0007669"/>
    <property type="project" value="UniProtKB-UniRule"/>
</dbReference>
<dbReference type="GO" id="GO:0006412">
    <property type="term" value="P:translation"/>
    <property type="evidence" value="ECO:0007669"/>
    <property type="project" value="UniProtKB-UniRule"/>
</dbReference>
<dbReference type="FunFam" id="3.30.1440.10:FF:000001">
    <property type="entry name" value="50S ribosomal protein L5"/>
    <property type="match status" value="1"/>
</dbReference>
<dbReference type="Gene3D" id="3.30.1440.10">
    <property type="match status" value="1"/>
</dbReference>
<dbReference type="HAMAP" id="MF_01333_B">
    <property type="entry name" value="Ribosomal_uL5_B"/>
    <property type="match status" value="1"/>
</dbReference>
<dbReference type="InterPro" id="IPR002132">
    <property type="entry name" value="Ribosomal_uL5"/>
</dbReference>
<dbReference type="InterPro" id="IPR020930">
    <property type="entry name" value="Ribosomal_uL5_bac-type"/>
</dbReference>
<dbReference type="InterPro" id="IPR031309">
    <property type="entry name" value="Ribosomal_uL5_C"/>
</dbReference>
<dbReference type="InterPro" id="IPR020929">
    <property type="entry name" value="Ribosomal_uL5_CS"/>
</dbReference>
<dbReference type="InterPro" id="IPR022803">
    <property type="entry name" value="Ribosomal_uL5_dom_sf"/>
</dbReference>
<dbReference type="InterPro" id="IPR031310">
    <property type="entry name" value="Ribosomal_uL5_N"/>
</dbReference>
<dbReference type="NCBIfam" id="NF000585">
    <property type="entry name" value="PRK00010.1"/>
    <property type="match status" value="1"/>
</dbReference>
<dbReference type="PANTHER" id="PTHR11994">
    <property type="entry name" value="60S RIBOSOMAL PROTEIN L11-RELATED"/>
    <property type="match status" value="1"/>
</dbReference>
<dbReference type="Pfam" id="PF00281">
    <property type="entry name" value="Ribosomal_L5"/>
    <property type="match status" value="1"/>
</dbReference>
<dbReference type="Pfam" id="PF00673">
    <property type="entry name" value="Ribosomal_L5_C"/>
    <property type="match status" value="1"/>
</dbReference>
<dbReference type="PIRSF" id="PIRSF002161">
    <property type="entry name" value="Ribosomal_L5"/>
    <property type="match status" value="1"/>
</dbReference>
<dbReference type="SUPFAM" id="SSF55282">
    <property type="entry name" value="RL5-like"/>
    <property type="match status" value="1"/>
</dbReference>
<dbReference type="PROSITE" id="PS00358">
    <property type="entry name" value="RIBOSOMAL_L5"/>
    <property type="match status" value="1"/>
</dbReference>
<proteinExistence type="inferred from homology"/>
<evidence type="ECO:0000255" key="1">
    <source>
        <dbReference type="HAMAP-Rule" id="MF_01333"/>
    </source>
</evidence>
<evidence type="ECO:0000305" key="2"/>
<name>RL5_CUPTR</name>
<keyword id="KW-0687">Ribonucleoprotein</keyword>
<keyword id="KW-0689">Ribosomal protein</keyword>
<keyword id="KW-0694">RNA-binding</keyword>
<keyword id="KW-0699">rRNA-binding</keyword>
<keyword id="KW-0820">tRNA-binding</keyword>
<protein>
    <recommendedName>
        <fullName evidence="1">Large ribosomal subunit protein uL5</fullName>
    </recommendedName>
    <alternativeName>
        <fullName evidence="2">50S ribosomal protein L5</fullName>
    </alternativeName>
</protein>
<organism>
    <name type="scientific">Cupriavidus taiwanensis (strain DSM 17343 / BCRC 17206 / CCUG 44338 / CIP 107171 / LMG 19424 / R1)</name>
    <name type="common">Ralstonia taiwanensis (strain LMG 19424)</name>
    <dbReference type="NCBI Taxonomy" id="977880"/>
    <lineage>
        <taxon>Bacteria</taxon>
        <taxon>Pseudomonadati</taxon>
        <taxon>Pseudomonadota</taxon>
        <taxon>Betaproteobacteria</taxon>
        <taxon>Burkholderiales</taxon>
        <taxon>Burkholderiaceae</taxon>
        <taxon>Cupriavidus</taxon>
    </lineage>
</organism>
<reference key="1">
    <citation type="journal article" date="2008" name="Genome Res.">
        <title>Genome sequence of the beta-rhizobium Cupriavidus taiwanensis and comparative genomics of rhizobia.</title>
        <authorList>
            <person name="Amadou C."/>
            <person name="Pascal G."/>
            <person name="Mangenot S."/>
            <person name="Glew M."/>
            <person name="Bontemps C."/>
            <person name="Capela D."/>
            <person name="Carrere S."/>
            <person name="Cruveiller S."/>
            <person name="Dossat C."/>
            <person name="Lajus A."/>
            <person name="Marchetti M."/>
            <person name="Poinsot V."/>
            <person name="Rouy Z."/>
            <person name="Servin B."/>
            <person name="Saad M."/>
            <person name="Schenowitz C."/>
            <person name="Barbe V."/>
            <person name="Batut J."/>
            <person name="Medigue C."/>
            <person name="Masson-Boivin C."/>
        </authorList>
    </citation>
    <scope>NUCLEOTIDE SEQUENCE [LARGE SCALE GENOMIC DNA]</scope>
    <source>
        <strain>DSM 17343 / BCRC 17206 / CCUG 44338 / CIP 107171 / LMG 19424 / R1</strain>
    </source>
</reference>
<gene>
    <name evidence="1" type="primary">rplE</name>
    <name type="ordered locus">RALTA_A2931</name>
</gene>
<sequence length="180" mass="20234">MAARLQEFYKEQVVPKLIEQFGYKSVMEVPRITKITLNMGLGEAINDKKIIENAVGDLTKIAGQKPVVTKAKKAIAGFKIRQGYPIGAMVTLRGERMFEFLDRFVTVALPRVRDFRGVSGRSFDGRGNYNIGVKEQIIFPEIEYDKIDALRGLNISITTTAKNDEEAKALLGAFKFPFRN</sequence>
<comment type="function">
    <text evidence="1">This is one of the proteins that bind and probably mediate the attachment of the 5S RNA into the large ribosomal subunit, where it forms part of the central protuberance. In the 70S ribosome it contacts protein S13 of the 30S subunit (bridge B1b), connecting the 2 subunits; this bridge is implicated in subunit movement. Contacts the P site tRNA; the 5S rRNA and some of its associated proteins might help stabilize positioning of ribosome-bound tRNAs.</text>
</comment>
<comment type="subunit">
    <text evidence="1">Part of the 50S ribosomal subunit; part of the 5S rRNA/L5/L18/L25 subcomplex. Contacts the 5S rRNA and the P site tRNA. Forms a bridge to the 30S subunit in the 70S ribosome.</text>
</comment>
<comment type="similarity">
    <text evidence="1">Belongs to the universal ribosomal protein uL5 family.</text>
</comment>